<comment type="function">
    <text evidence="1">Catalyzes the NADPH-dependent reduction of L-glutamate 5-phosphate into L-glutamate 5-semialdehyde and phosphate. The product spontaneously undergoes cyclization to form 1-pyrroline-5-carboxylate.</text>
</comment>
<comment type="catalytic activity">
    <reaction evidence="1">
        <text>L-glutamate 5-semialdehyde + phosphate + NADP(+) = L-glutamyl 5-phosphate + NADPH + H(+)</text>
        <dbReference type="Rhea" id="RHEA:19541"/>
        <dbReference type="ChEBI" id="CHEBI:15378"/>
        <dbReference type="ChEBI" id="CHEBI:43474"/>
        <dbReference type="ChEBI" id="CHEBI:57783"/>
        <dbReference type="ChEBI" id="CHEBI:58066"/>
        <dbReference type="ChEBI" id="CHEBI:58274"/>
        <dbReference type="ChEBI" id="CHEBI:58349"/>
        <dbReference type="EC" id="1.2.1.41"/>
    </reaction>
</comment>
<comment type="pathway">
    <text evidence="1">Amino-acid biosynthesis; L-proline biosynthesis; L-glutamate 5-semialdehyde from L-glutamate: step 2/2.</text>
</comment>
<comment type="subcellular location">
    <subcellularLocation>
        <location evidence="1">Cytoplasm</location>
    </subcellularLocation>
</comment>
<comment type="similarity">
    <text evidence="1">Belongs to the gamma-glutamyl phosphate reductase family.</text>
</comment>
<accession>Q5XAL0</accession>
<reference key="1">
    <citation type="journal article" date="2004" name="J. Infect. Dis.">
        <title>Progress toward characterization of the group A Streptococcus metagenome: complete genome sequence of a macrolide-resistant serotype M6 strain.</title>
        <authorList>
            <person name="Banks D.J."/>
            <person name="Porcella S.F."/>
            <person name="Barbian K.D."/>
            <person name="Beres S.B."/>
            <person name="Philips L.E."/>
            <person name="Voyich J.M."/>
            <person name="DeLeo F.R."/>
            <person name="Martin J.M."/>
            <person name="Somerville G.A."/>
            <person name="Musser J.M."/>
        </authorList>
    </citation>
    <scope>NUCLEOTIDE SEQUENCE [LARGE SCALE GENOMIC DNA]</scope>
    <source>
        <strain>ATCC BAA-946 / MGAS10394</strain>
    </source>
</reference>
<name>PROA_STRP6</name>
<gene>
    <name evidence="1" type="primary">proA</name>
    <name type="ordered locus">M6_Spy1418</name>
</gene>
<feature type="chain" id="PRO_0000189792" description="Gamma-glutamyl phosphate reductase">
    <location>
        <begin position="1"/>
        <end position="416"/>
    </location>
</feature>
<keyword id="KW-0028">Amino-acid biosynthesis</keyword>
<keyword id="KW-0963">Cytoplasm</keyword>
<keyword id="KW-0521">NADP</keyword>
<keyword id="KW-0560">Oxidoreductase</keyword>
<keyword id="KW-0641">Proline biosynthesis</keyword>
<evidence type="ECO:0000255" key="1">
    <source>
        <dbReference type="HAMAP-Rule" id="MF_00412"/>
    </source>
</evidence>
<proteinExistence type="inferred from homology"/>
<organism>
    <name type="scientific">Streptococcus pyogenes serotype M6 (strain ATCC BAA-946 / MGAS10394)</name>
    <dbReference type="NCBI Taxonomy" id="286636"/>
    <lineage>
        <taxon>Bacteria</taxon>
        <taxon>Bacillati</taxon>
        <taxon>Bacillota</taxon>
        <taxon>Bacilli</taxon>
        <taxon>Lactobacillales</taxon>
        <taxon>Streptococcaceae</taxon>
        <taxon>Streptococcus</taxon>
    </lineage>
</organism>
<dbReference type="EC" id="1.2.1.41" evidence="1"/>
<dbReference type="EMBL" id="CP000003">
    <property type="protein sequence ID" value="AAT87553.1"/>
    <property type="molecule type" value="Genomic_DNA"/>
</dbReference>
<dbReference type="RefSeq" id="WP_011018075.1">
    <property type="nucleotide sequence ID" value="NC_006086.1"/>
</dbReference>
<dbReference type="SMR" id="Q5XAL0"/>
<dbReference type="KEGG" id="spa:M6_Spy1418"/>
<dbReference type="HOGENOM" id="CLU_030231_0_0_9"/>
<dbReference type="UniPathway" id="UPA00098">
    <property type="reaction ID" value="UER00360"/>
</dbReference>
<dbReference type="Proteomes" id="UP000001167">
    <property type="component" value="Chromosome"/>
</dbReference>
<dbReference type="GO" id="GO:0005737">
    <property type="term" value="C:cytoplasm"/>
    <property type="evidence" value="ECO:0007669"/>
    <property type="project" value="UniProtKB-SubCell"/>
</dbReference>
<dbReference type="GO" id="GO:0004350">
    <property type="term" value="F:glutamate-5-semialdehyde dehydrogenase activity"/>
    <property type="evidence" value="ECO:0007669"/>
    <property type="project" value="UniProtKB-UniRule"/>
</dbReference>
<dbReference type="GO" id="GO:0050661">
    <property type="term" value="F:NADP binding"/>
    <property type="evidence" value="ECO:0007669"/>
    <property type="project" value="InterPro"/>
</dbReference>
<dbReference type="GO" id="GO:0055129">
    <property type="term" value="P:L-proline biosynthetic process"/>
    <property type="evidence" value="ECO:0007669"/>
    <property type="project" value="UniProtKB-UniRule"/>
</dbReference>
<dbReference type="CDD" id="cd07079">
    <property type="entry name" value="ALDH_F18-19_ProA-GPR"/>
    <property type="match status" value="1"/>
</dbReference>
<dbReference type="FunFam" id="3.40.309.10:FF:000006">
    <property type="entry name" value="Gamma-glutamyl phosphate reductase"/>
    <property type="match status" value="1"/>
</dbReference>
<dbReference type="Gene3D" id="3.40.605.10">
    <property type="entry name" value="Aldehyde Dehydrogenase, Chain A, domain 1"/>
    <property type="match status" value="1"/>
</dbReference>
<dbReference type="Gene3D" id="3.40.309.10">
    <property type="entry name" value="Aldehyde Dehydrogenase, Chain A, domain 2"/>
    <property type="match status" value="1"/>
</dbReference>
<dbReference type="HAMAP" id="MF_00412">
    <property type="entry name" value="ProA"/>
    <property type="match status" value="1"/>
</dbReference>
<dbReference type="InterPro" id="IPR016161">
    <property type="entry name" value="Ald_DH/histidinol_DH"/>
</dbReference>
<dbReference type="InterPro" id="IPR016163">
    <property type="entry name" value="Ald_DH_C"/>
</dbReference>
<dbReference type="InterPro" id="IPR016162">
    <property type="entry name" value="Ald_DH_N"/>
</dbReference>
<dbReference type="InterPro" id="IPR015590">
    <property type="entry name" value="Aldehyde_DH_dom"/>
</dbReference>
<dbReference type="InterPro" id="IPR020593">
    <property type="entry name" value="G-glutamylP_reductase_CS"/>
</dbReference>
<dbReference type="InterPro" id="IPR012134">
    <property type="entry name" value="Glu-5-SA_DH"/>
</dbReference>
<dbReference type="InterPro" id="IPR000965">
    <property type="entry name" value="GPR_dom"/>
</dbReference>
<dbReference type="NCBIfam" id="NF001221">
    <property type="entry name" value="PRK00197.1"/>
    <property type="match status" value="1"/>
</dbReference>
<dbReference type="NCBIfam" id="TIGR00407">
    <property type="entry name" value="proA"/>
    <property type="match status" value="1"/>
</dbReference>
<dbReference type="PANTHER" id="PTHR11063:SF8">
    <property type="entry name" value="DELTA-1-PYRROLINE-5-CARBOXYLATE SYNTHASE"/>
    <property type="match status" value="1"/>
</dbReference>
<dbReference type="PANTHER" id="PTHR11063">
    <property type="entry name" value="GLUTAMATE SEMIALDEHYDE DEHYDROGENASE"/>
    <property type="match status" value="1"/>
</dbReference>
<dbReference type="Pfam" id="PF00171">
    <property type="entry name" value="Aldedh"/>
    <property type="match status" value="2"/>
</dbReference>
<dbReference type="PIRSF" id="PIRSF000151">
    <property type="entry name" value="GPR"/>
    <property type="match status" value="1"/>
</dbReference>
<dbReference type="SUPFAM" id="SSF53720">
    <property type="entry name" value="ALDH-like"/>
    <property type="match status" value="1"/>
</dbReference>
<dbReference type="PROSITE" id="PS01223">
    <property type="entry name" value="PROA"/>
    <property type="match status" value="1"/>
</dbReference>
<sequence length="416" mass="45407">MTDMRRLGQRAKQASLLIAPLSTQIKNRFLSTLAKALVDDTQTLLAANQKDLANAKEHGISDIMMDRLRLTSERIKAIAQGVQQVADLADPIGQVIKGYTNLDGLKILQKRVPLGVIAMIFESRPNVSVDAFSLAFKTNNAIILRGGKDALHSNKALVKLIRQSLEKSGITPDAVQLVEDPSHAVAEELMQATDYVDVLIPRGGAKLIQTVKEKAKVPVIETGVGNVHIYVDAQADLDMATNIVINAKTKRPSVCNAAEGLVIHEAVAARFIPMLEKAINQVQPVEWRADDKALPLFEQAVPAKAEDFETEFLDYIMSVKVVSSLEEAISWINQHTSHHSEAIITRDIKAAETFQDLVDAAAVYVNASTRFTDGFVFGLGAEIGISTQKMHARGPMGLEALTSTKFYINGDGHIRE</sequence>
<protein>
    <recommendedName>
        <fullName evidence="1">Gamma-glutamyl phosphate reductase</fullName>
        <shortName evidence="1">GPR</shortName>
        <ecNumber evidence="1">1.2.1.41</ecNumber>
    </recommendedName>
    <alternativeName>
        <fullName evidence="1">Glutamate-5-semialdehyde dehydrogenase</fullName>
    </alternativeName>
    <alternativeName>
        <fullName evidence="1">Glutamyl-gamma-semialdehyde dehydrogenase</fullName>
        <shortName evidence="1">GSA dehydrogenase</shortName>
    </alternativeName>
</protein>